<feature type="chain" id="PRO_1000044709" description="Altronate oxidoreductase">
    <location>
        <begin position="1"/>
        <end position="483"/>
    </location>
</feature>
<feature type="binding site" evidence="1">
    <location>
        <begin position="18"/>
        <end position="29"/>
    </location>
    <ligand>
        <name>NAD(+)</name>
        <dbReference type="ChEBI" id="CHEBI:57540"/>
    </ligand>
</feature>
<sequence>MQTLNRRDFPGRSHPDKIIQFGEGNFLRAFVDWQIDLLNEHTDLNAGIVVIRPIDTDFPPSLSTQDGLYTAVIRGLNEQGEAVRESRLIRSVNREINIYRQFDEYLALARDPNIRFMFSNTTEAGIAWNEADQFSDAPPSSFPAKLTRLLFERFEHFSGAADKGWVLLPCELIDYNGEALRELVLRYASHWQLPAAFTQWLTENNTFCSTLVDRIVTGYPRDEVAALQAELGYQDSFLDTAEYFYLFVIQGPKELAQELRLDKLDLNVRIVDDIKPYKERKVAILNGAHTALVPVAYLSGLDTVGQTMDDVQISSFVEKTITEEIVPVLDLPEDELLSFSQAVLSRFRNPFIQHQLLSIALNGMTKFRTRILPQLLTYQQQQGKLPPRLTFALAALIAFYRGERDGQTYPLQDDAHWLERYSTLWNGVKHGDIKLAELVNTVLSDTAHWGQDLTAVPQLANQVTEQLQTIIDSGMRAAVAAYS</sequence>
<keyword id="KW-0520">NAD</keyword>
<keyword id="KW-0560">Oxidoreductase</keyword>
<comment type="catalytic activity">
    <reaction evidence="1">
        <text>D-altronate + NAD(+) = keto-D-tagaturonate + NADH + H(+)</text>
        <dbReference type="Rhea" id="RHEA:17813"/>
        <dbReference type="ChEBI" id="CHEBI:15378"/>
        <dbReference type="ChEBI" id="CHEBI:17360"/>
        <dbReference type="ChEBI" id="CHEBI:17886"/>
        <dbReference type="ChEBI" id="CHEBI:57540"/>
        <dbReference type="ChEBI" id="CHEBI:57945"/>
        <dbReference type="EC" id="1.1.1.58"/>
    </reaction>
</comment>
<comment type="pathway">
    <text evidence="1">Carbohydrate metabolism; pentose and glucuronate interconversion.</text>
</comment>
<comment type="similarity">
    <text evidence="1">Belongs to the mannitol dehydrogenase family. UxaB subfamily.</text>
</comment>
<protein>
    <recommendedName>
        <fullName evidence="1">Altronate oxidoreductase</fullName>
        <ecNumber evidence="1">1.1.1.58</ecNumber>
    </recommendedName>
    <alternativeName>
        <fullName evidence="1">Tagaturonate dehydrogenase</fullName>
    </alternativeName>
    <alternativeName>
        <fullName evidence="1">Tagaturonate reductase</fullName>
    </alternativeName>
</protein>
<gene>
    <name evidence="1" type="primary">uxaB</name>
    <name type="ordered locus">YE3707</name>
</gene>
<accession>A1JR24</accession>
<proteinExistence type="inferred from homology"/>
<evidence type="ECO:0000255" key="1">
    <source>
        <dbReference type="HAMAP-Rule" id="MF_00670"/>
    </source>
</evidence>
<organism>
    <name type="scientific">Yersinia enterocolitica serotype O:8 / biotype 1B (strain NCTC 13174 / 8081)</name>
    <dbReference type="NCBI Taxonomy" id="393305"/>
    <lineage>
        <taxon>Bacteria</taxon>
        <taxon>Pseudomonadati</taxon>
        <taxon>Pseudomonadota</taxon>
        <taxon>Gammaproteobacteria</taxon>
        <taxon>Enterobacterales</taxon>
        <taxon>Yersiniaceae</taxon>
        <taxon>Yersinia</taxon>
    </lineage>
</organism>
<reference key="1">
    <citation type="journal article" date="2006" name="PLoS Genet.">
        <title>The complete genome sequence and comparative genome analysis of the high pathogenicity Yersinia enterocolitica strain 8081.</title>
        <authorList>
            <person name="Thomson N.R."/>
            <person name="Howard S."/>
            <person name="Wren B.W."/>
            <person name="Holden M.T.G."/>
            <person name="Crossman L."/>
            <person name="Challis G.L."/>
            <person name="Churcher C."/>
            <person name="Mungall K."/>
            <person name="Brooks K."/>
            <person name="Chillingworth T."/>
            <person name="Feltwell T."/>
            <person name="Abdellah Z."/>
            <person name="Hauser H."/>
            <person name="Jagels K."/>
            <person name="Maddison M."/>
            <person name="Moule S."/>
            <person name="Sanders M."/>
            <person name="Whitehead S."/>
            <person name="Quail M.A."/>
            <person name="Dougan G."/>
            <person name="Parkhill J."/>
            <person name="Prentice M.B."/>
        </authorList>
    </citation>
    <scope>NUCLEOTIDE SEQUENCE [LARGE SCALE GENOMIC DNA]</scope>
    <source>
        <strain>NCTC 13174 / 8081</strain>
    </source>
</reference>
<dbReference type="EC" id="1.1.1.58" evidence="1"/>
<dbReference type="EMBL" id="AM286415">
    <property type="protein sequence ID" value="CAL13734.1"/>
    <property type="molecule type" value="Genomic_DNA"/>
</dbReference>
<dbReference type="RefSeq" id="WP_005174192.1">
    <property type="nucleotide sequence ID" value="NC_008800.1"/>
</dbReference>
<dbReference type="RefSeq" id="YP_001007862.1">
    <property type="nucleotide sequence ID" value="NC_008800.1"/>
</dbReference>
<dbReference type="SMR" id="A1JR24"/>
<dbReference type="KEGG" id="yen:YE3707"/>
<dbReference type="PATRIC" id="fig|393305.7.peg.3947"/>
<dbReference type="eggNOG" id="COG0246">
    <property type="taxonomic scope" value="Bacteria"/>
</dbReference>
<dbReference type="HOGENOM" id="CLU_027324_1_0_6"/>
<dbReference type="OrthoDB" id="9768714at2"/>
<dbReference type="UniPathway" id="UPA00246"/>
<dbReference type="Proteomes" id="UP000000642">
    <property type="component" value="Chromosome"/>
</dbReference>
<dbReference type="GO" id="GO:0005829">
    <property type="term" value="C:cytosol"/>
    <property type="evidence" value="ECO:0007669"/>
    <property type="project" value="TreeGrafter"/>
</dbReference>
<dbReference type="GO" id="GO:0008926">
    <property type="term" value="F:mannitol-1-phosphate 5-dehydrogenase activity"/>
    <property type="evidence" value="ECO:0007669"/>
    <property type="project" value="TreeGrafter"/>
</dbReference>
<dbReference type="GO" id="GO:0009026">
    <property type="term" value="F:tagaturonate reductase activity"/>
    <property type="evidence" value="ECO:0007669"/>
    <property type="project" value="UniProtKB-UniRule"/>
</dbReference>
<dbReference type="GO" id="GO:0019698">
    <property type="term" value="P:D-galacturonate catabolic process"/>
    <property type="evidence" value="ECO:0007669"/>
    <property type="project" value="TreeGrafter"/>
</dbReference>
<dbReference type="GO" id="GO:0019592">
    <property type="term" value="P:mannitol catabolic process"/>
    <property type="evidence" value="ECO:0007669"/>
    <property type="project" value="TreeGrafter"/>
</dbReference>
<dbReference type="FunFam" id="3.40.50.720:FF:000153">
    <property type="entry name" value="Altronate oxidoreductase"/>
    <property type="match status" value="1"/>
</dbReference>
<dbReference type="Gene3D" id="1.10.1040.10">
    <property type="entry name" value="N-(1-d-carboxylethyl)-l-norvaline Dehydrogenase, domain 2"/>
    <property type="match status" value="1"/>
</dbReference>
<dbReference type="Gene3D" id="3.40.50.720">
    <property type="entry name" value="NAD(P)-binding Rossmann-like Domain"/>
    <property type="match status" value="1"/>
</dbReference>
<dbReference type="HAMAP" id="MF_00670">
    <property type="entry name" value="Altron_oxidoreduct"/>
    <property type="match status" value="1"/>
</dbReference>
<dbReference type="InterPro" id="IPR008927">
    <property type="entry name" value="6-PGluconate_DH-like_C_sf"/>
</dbReference>
<dbReference type="InterPro" id="IPR013328">
    <property type="entry name" value="6PGD_dom2"/>
</dbReference>
<dbReference type="InterPro" id="IPR023668">
    <property type="entry name" value="Altronate_OxRdtase"/>
</dbReference>
<dbReference type="InterPro" id="IPR013118">
    <property type="entry name" value="Mannitol_DH_C"/>
</dbReference>
<dbReference type="InterPro" id="IPR013131">
    <property type="entry name" value="Mannitol_DH_N"/>
</dbReference>
<dbReference type="InterPro" id="IPR036291">
    <property type="entry name" value="NAD(P)-bd_dom_sf"/>
</dbReference>
<dbReference type="NCBIfam" id="NF002969">
    <property type="entry name" value="PRK03643.1"/>
    <property type="match status" value="1"/>
</dbReference>
<dbReference type="PANTHER" id="PTHR30524:SF0">
    <property type="entry name" value="ALTRONATE OXIDOREDUCTASE-RELATED"/>
    <property type="match status" value="1"/>
</dbReference>
<dbReference type="PANTHER" id="PTHR30524">
    <property type="entry name" value="MANNITOL-1-PHOSPHATE 5-DEHYDROGENASE"/>
    <property type="match status" value="1"/>
</dbReference>
<dbReference type="Pfam" id="PF01232">
    <property type="entry name" value="Mannitol_dh"/>
    <property type="match status" value="1"/>
</dbReference>
<dbReference type="Pfam" id="PF08125">
    <property type="entry name" value="Mannitol_dh_C"/>
    <property type="match status" value="1"/>
</dbReference>
<dbReference type="SUPFAM" id="SSF48179">
    <property type="entry name" value="6-phosphogluconate dehydrogenase C-terminal domain-like"/>
    <property type="match status" value="1"/>
</dbReference>
<dbReference type="SUPFAM" id="SSF51735">
    <property type="entry name" value="NAD(P)-binding Rossmann-fold domains"/>
    <property type="match status" value="1"/>
</dbReference>
<name>UXAB_YERE8</name>